<accession>Q709C8</accession>
<accession>Q6ISR4</accession>
<accession>Q702P2</accession>
<accession>Q702P3</accession>
<accession>Q709C9</accession>
<accession>Q9NXN8</accession>
<accession>Q9P2C6</accession>
<sequence>MVLESVVADLLNRFLGDYVENLNKSQLKLGIWGGNVALDNLQIKENALSELDVPFKVKAGQIDKLTLKIPWKNLYGEAVVATLEGLYLLVVPGASIKYDAVKEEKSLQDVKQKELSRIEEALQKAAEKGTHSGEFIYGLENFVYKDIKPGRKRKKHKKHFKKPFKGLDRSKDKPKEAKKDTFVEKLATQVIKNVQVKITDIHIKYEDDVTDPKRPLSFGVTLGELSLLTANEHWTPCILNEADKIIYKLIRLDSLSAYWNVNCSMSYQRSREQILDQLKNEILTSGNIPPNYQYIFQPISASAKLYMNPYAESELKTPKLDCNIEIQNIAIELTKPQYLSMIDLLESVDYMVRNAPYRKYKPYLPLHTNGRRWWKYAIDSVLEVHIRRYTQMWSWSNIKKHRQLLKSYKIAYKNKLTQSKVSEEIQKEIQDLEKTLDVFNIILARQQAQVEVIRSGQKLRKKSADTGEKRGGWFSGLWGKKESKKKDEESLIPETIDDLMTPEEKDKLFTAIGYSESTHNLTLPKQYVAHIMTLKLVSTSVTIRENKNIPEILKIQIIGLGTQVSQRPGAQALKVEAKLEHWYITGLRQQDIVPSLVASIGDTTSSLLKIKFETNPEDSPADQTLIVQSQPVEVIYDAKTVNAVVEFFQSNKGLDLEQITSATLMKLEEIKERTATGLTHIIETRKVLDLRINLKPSYLVVPQTGFHHEKSDLLILDFGTFQLNSKDQGLQKTTNSSLEEIMDKAYDKFDVEIKNVQLLFARAEETWKKCRFQHPSTMHILQPMDIHVELAKAMVEKDIRMARFKVSGGLPLMHVRISDQKMKDVLYLMNSIPLPQKSSAQSPERQVSSIPIISGGTKGLLGTSLLLDTVESESDDEYFDAEDGEPQTCKSMKGSELKKAAEVPNEELINLLLKFEIKEVILEFTKQQKEEDTILVFNVTQLGTEATMRTFDLTVVSYLKKISLDYHEIEGSKRKPLHLISSSDKPGLDLLKVEYIKADKNGPSFQTAFGKTEQTVKVAFSSLNLLLQTQALVASINYLTTIIPSDDQSISVAKEVQISTEKQQKNSTLPKAIVSSRDSDIIDFRLFAKLNAFCVIVCNEKNNIAEIKIQGLDSSLSLQSRKQSLFARLENIIVTDVDPKTVHKKAVSIMGNEVFRFNLDLYPDATEGDLYTDMSKVDGVLSLNVGCIQIVYLHKFLMSLLNFLNNFQTAKESLSAATAQAAERAATSVKDLAQRSFRVSINIDLKAPVIVIPQSSISTNAVVVDLGLIRVHNQFSLVSDEDYLNPPVIDRMDVQLTKLTLYRTVIQPGIYHPDIQLLHPINLEFLVNRNLAASWYHKVPVVEIKGHLDSMNVSLNQEDLNLLFRILTENLCEGTEDLDKVKPRVQETGEIKEPLEISISQDVHDSKNTLTTGVEEIRSVDIINMLLNFEIKEVVVTLMKKSEKKGRPLHELNVLQLGMEAKVKTYDMTAKAYLKKISMQCFDFTDSKGEPLHIINSSNVTDEPLLKMLLTKADSDGPEFKTIHDSTKQRLKVSFASLDLVLHLEALLSFMDFLSSAAPFSEPSSSEKESELKPLVGESRSIAVKAVSSNISQKDVFDLKITAELNAFNVFVCDQKCNIADIKIHGMDASISVKPKQTDVFARLKDIIVMNVDLQSIHKKAVSILGDEVFRFQLTLYPDATEGEAYADMSKVDGKLSFKVGCIQIVYVHKFFMSLLNFLNNFQTAKEALSTATVQAAERAASSMKDLAQKSFRLLMDINLKAPVIIIPQSSVSPNAVIADLGLIRVENKFSLVPMEHYSLPPVIDKMNIELTQLKLSRTILQASLPQNDIEILKPVNMLLSIQRNLAAAWYVQIPGMEIKGKLKPMQVALSEDDLTVLMKILLENLGEASSQPSPTQSVQETVRVRKVDVSSVPDHLKEQEDWTDSKLSMNQIVSLQFDFHFESLSIILYNNDINQESGVAFHNDSFQLGELRLHLMASSGKMFKDGSMNVSVKLKTCTLDDLREGIERATSRMIDRKNDQDNNSSMIDISYKQDKNGSQIDAVLDKLYVCASVEFLMTVADFFIKAVPQSPENVAKETQILPRQTATGKVKIEKDDSVRPNMTLKAMITDPEVVFVASLTKADAPALTASFQCNLSLSTSKLEQMMEASVRDLKVLACPFLREKRGKNITTVLQPCSLFMEKCTWASGKQNINIMVKEFIIKISPIILNTVLTIMAALSPKTKEDGSKDTSKEMENLWGIKSINDYNTWFLGVDTATEITESFKGIEHSLIEENCGVVVESIQVTLECGLGHRTVPLLLAESKFSGNIKNWTSLMAAVADVTLQVHYYNEIHAVWEPLIERVEGKRQWNLRLDVKKNPVQDKSLLPGDDFIPEPQMAIHISSGNTMNITISKSCLNVFNNLAKGFSEGTASTFDYSLKDRAPFTVKNAVGVPIKVKPNCNLRVMGFPEKSDIFDVDAGQNLELEYASMVPSSQGNLSILSRQESSFFTLTIVPHGYTEVANIPVARPGRRLYNVRNPNASHSDSVLVQIDATEGNKVITLRSPLQIKNHFSIAFIIYKFVKNVKLLERIGIARPEEEFHVPLDSYRCQLFIQPAGILEHQYKESTTYISWKEELHRSREVRCMLQCPSVEVSFLPLIVNTVALPDELSYICTHGEDWDVAYIIHLYPSLTLRNLLPYSLRYLLEGTAETHELAEGSTADVLHSRISGEIMELVLVKYQGKNWNGHFRIRDTLPEFFPVCFSSDSTEVTTVDLSVHVRRIGSRMVLSVFSPYWLINKTTRVLQYRSEDIHVKHPADFRDIILFSFKKKNIFTKNKVQLKISTSAWSSSFSLDTVGSYGCVKCPANNMEYLVGVSIKMSSFNLSRIVTLTPFCTIANKSSLELEVGEIASDGSMPTNKWNYIASSECLPFWPESLSGKLCVRVVGCEGSSKPFFYNRQDNGTLLSLEDLNGGILVDVNTAEHSTVITFSDYHEGSAPALIMNHTPWDILTYKQSGSPEEMVLLPRQARLFAWADPTGTRKLTWTYAANVGEHDLLKDGCGQFPYDANIQIHWVSFLDGRQRVLLFTDDVALVSKALQAEEMEQADYEITLSLHSLGLSLVNNESKQEVSYIGITSSGVVWEVKPKQKWKPFSQKQIILLEQSYQKHQISRDHGWIKLDNNFEVNFDKDPMEMRLPIRSPIKRDFLSGIQIEFKQSSHQRSLRARLYWLQVDNQLPGAMFPVVFHPVAPPKSIALDSEPKPFIDVSVITRFNEYSKVLQFKYFMVLIQEMALKIDQGFLGAIIALFTPTTDPEAERRRTKLIQQDIDALNAELMETSMTDMSILSFFEHFHISPVKLHLSLSLGSGGEESDKEKQEMFAVHSVNLLLKSIGATLTDVDDLIFKLAYYEIRYQFYKRDQLIWSVVRHYSEQFLKQMYVLVLGLDVLGNPFGLIRGLSEGVEALFYEPFQGAVQGPEEFAEGLVIGVRSLFGHTVGGAAGVVSRITGSVGKGLAAITMDKEYQQKRREELSRQPRDFGDSLARGGKGFLRGVVGGVTGIITKPVEGAKKEGAAGFFKGIGKGLVGAVARPTGGIVDMASSTFQGIQRAAESTEEVSSLRPPRLIHEDGIIRPYDRQESEGSDLLENHIKKLEGETYRYHCAIPGSKKTILMVTNRRVLCIKEVEILGLMCVDWQCPFEDFVFPPSVSENVLKISVKEQGLFHKKDSANQGCVRKVYLKDTATAERACNAIEDAQSTRQQQKLMKQSSVRLLRPQLPS</sequence>
<feature type="chain" id="PRO_0000262949" description="Intermembrane lipid transfer protein VPS13C">
    <location>
        <begin position="1"/>
        <end position="3753"/>
    </location>
</feature>
<feature type="domain" description="Chorein N-terminal" evidence="3">
    <location>
        <begin position="3"/>
        <end position="116"/>
    </location>
</feature>
<feature type="domain" description="SHR-BD" evidence="3">
    <location>
        <begin position="2766"/>
        <end position="3016"/>
    </location>
</feature>
<feature type="region of interest" description="Disordered" evidence="4">
    <location>
        <begin position="150"/>
        <end position="176"/>
    </location>
</feature>
<feature type="region of interest" description="Required for late endosome/lysosome localization" evidence="9">
    <location>
        <begin position="2415"/>
        <end position="3309"/>
    </location>
</feature>
<feature type="region of interest" description="Required for lipid droplet localization" evidence="9">
    <location>
        <begin position="3310"/>
        <end position="3753"/>
    </location>
</feature>
<feature type="short sequence motif" description="FFAT" evidence="12">
    <location>
        <begin position="877"/>
        <end position="883"/>
    </location>
</feature>
<feature type="compositionally biased region" description="Basic residues" evidence="4">
    <location>
        <begin position="150"/>
        <end position="164"/>
    </location>
</feature>
<feature type="compositionally biased region" description="Basic and acidic residues" evidence="4">
    <location>
        <begin position="165"/>
        <end position="176"/>
    </location>
</feature>
<feature type="modified residue" description="Phosphoserine" evidence="2">
    <location>
        <position position="132"/>
    </location>
</feature>
<feature type="modified residue" description="Phosphothreonine" evidence="18">
    <location>
        <position position="614"/>
    </location>
</feature>
<feature type="modified residue" description="Phosphoserine" evidence="18">
    <location>
        <position position="619"/>
    </location>
</feature>
<feature type="modified residue" description="Phosphothreonine" evidence="18">
    <location>
        <position position="624"/>
    </location>
</feature>
<feature type="modified residue" description="Phosphoserine" evidence="18 19">
    <location>
        <position position="737"/>
    </location>
</feature>
<feature type="modified residue" description="Phosphoserine" evidence="19">
    <location>
        <position position="842"/>
    </location>
</feature>
<feature type="modified residue" description="Phosphoserine" evidence="2">
    <location>
        <position position="872"/>
    </location>
</feature>
<feature type="modified residue" description="Phosphoserine" evidence="2">
    <location>
        <position position="874"/>
    </location>
</feature>
<feature type="modified residue" description="Phosphoserine" evidence="2">
    <location>
        <position position="1979"/>
    </location>
</feature>
<feature type="modified residue" description="Phosphoserine" evidence="21">
    <location>
        <position position="2473"/>
    </location>
</feature>
<feature type="modified residue" description="Omega-N-methylarginine" evidence="2">
    <location>
        <position position="3519"/>
    </location>
</feature>
<feature type="modified residue" description="Omega-N-methylarginine" evidence="20">
    <location>
        <position position="3526"/>
    </location>
</feature>
<feature type="modified residue" description="N6-acetyllysine" evidence="17">
    <location>
        <position position="3538"/>
    </location>
</feature>
<feature type="modified residue" description="Phosphoserine" evidence="19">
    <location>
        <position position="3641"/>
    </location>
</feature>
<feature type="splice variant" id="VSP_052243" description="In isoform 3 and isoform 4." evidence="10">
    <location>
        <begin position="129"/>
        <end position="171"/>
    </location>
</feature>
<feature type="splice variant" id="VSP_052244" description="In isoform 2 and isoform 4." evidence="10">
    <original>NHIKKL</original>
    <variation>QELEIQE</variation>
    <location>
        <begin position="3622"/>
        <end position="3627"/>
    </location>
</feature>
<feature type="splice variant" id="VSP_052245" description="In isoform 2 and isoform 4." evidence="10">
    <location>
        <begin position="3628"/>
        <end position="3753"/>
    </location>
</feature>
<feature type="sequence variant" id="VAR_029548" description="In dbSNP:rs12595158.">
    <original>R</original>
    <variation>H</variation>
    <location>
        <position position="153"/>
    </location>
</feature>
<feature type="sequence variant" id="VAR_029549" description="In dbSNP:rs3784634." evidence="5">
    <original>R</original>
    <variation>K</variation>
    <location>
        <position position="974"/>
    </location>
</feature>
<feature type="sequence variant" id="VAR_029550" description="In dbSNP:rs3784635.">
    <original>I</original>
    <variation>V</variation>
    <location>
        <position position="1132"/>
    </location>
</feature>
<feature type="sequence variant" id="VAR_029551" description="In dbSNP:rs2303405.">
    <original>Y</original>
    <variation>C</variation>
    <location>
        <position position="1302"/>
    </location>
</feature>
<feature type="sequence variant" id="VAR_076363" description="In PARK23; dbSNP:rs369100678." evidence="8">
    <original>G</original>
    <variation>R</variation>
    <location>
        <position position="1389"/>
    </location>
</feature>
<feature type="sequence variant" id="VAR_029552" description="In dbSNP:rs8026956.">
    <original>T</original>
    <variation>A</variation>
    <location>
        <position position="1485"/>
    </location>
</feature>
<feature type="sequence variant" id="VAR_029553" description="In dbSNP:rs11629598.">
    <original>I</original>
    <variation>V</variation>
    <location>
        <position position="1495"/>
    </location>
</feature>
<feature type="sequence variant" id="VAR_029554" description="In dbSNP:rs11629838.">
    <original>S</original>
    <variation>Y</variation>
    <location>
        <position position="1592"/>
    </location>
</feature>
<feature type="sequence variant" id="VAR_029555" description="In dbSNP:rs12907567.">
    <original>V</original>
    <variation>M</variation>
    <location>
        <position position="2322"/>
    </location>
</feature>
<feature type="sequence variant" id="VAR_053808" description="In dbSNP:rs34060567.">
    <original>K</original>
    <variation>R</variation>
    <location>
        <position position="2808"/>
    </location>
</feature>
<feature type="sequence variant" id="VAR_074191" evidence="7">
    <original>C</original>
    <variation>F</variation>
    <location>
        <position position="2872"/>
    </location>
</feature>
<feature type="sequence variant" id="VAR_029556" description="In dbSNP:rs10851704.">
    <original>S</original>
    <variation>N</variation>
    <location>
        <position position="2913"/>
    </location>
</feature>
<feature type="mutagenesis site" description="Abnormal localization to the cytosol." evidence="9">
    <original>YF</original>
    <variation>SL</variation>
    <location>
        <begin position="878"/>
        <end position="879"/>
    </location>
</feature>
<name>VP13C_HUMAN</name>
<gene>
    <name evidence="13" type="primary">VPS13C</name>
    <name evidence="15" type="synonym">KIAA1421</name>
</gene>
<comment type="function">
    <text evidence="1 8">Mediates the transfer of lipids between membranes at organelle contact sites (By similarity). Necessary for proper mitochondrial function and maintenance of mitochondrial transmembrane potential (PubMed:26942284). Involved in the regulation of PINK1/PRKN-mediated mitophagy in response to mitochondrial depolarization (PubMed:26942284).</text>
</comment>
<comment type="subcellular location">
    <subcellularLocation>
        <location evidence="8">Mitochondrion outer membrane</location>
    </subcellularLocation>
    <subcellularLocation>
        <location evidence="9">Lipid droplet</location>
    </subcellularLocation>
    <subcellularLocation>
        <location evidence="9">Endoplasmic reticulum membrane</location>
    </subcellularLocation>
    <subcellularLocation>
        <location evidence="9">Lysosome membrane</location>
    </subcellularLocation>
    <subcellularLocation>
        <location evidence="9">Late endosome membrane</location>
    </subcellularLocation>
    <text evidence="9">May localize to endoplasmic reticulum-endolysosome contact sites.</text>
</comment>
<comment type="alternative products">
    <event type="alternative splicing"/>
    <isoform>
        <id>Q709C8-1</id>
        <name evidence="6">1</name>
        <name evidence="6">2A</name>
        <sequence type="displayed"/>
    </isoform>
    <isoform>
        <id>Q709C8-2</id>
        <name evidence="6">2</name>
        <name evidence="6">2B</name>
        <sequence type="described" ref="VSP_052244 VSP_052245"/>
    </isoform>
    <isoform>
        <id>Q709C8-3</id>
        <name evidence="6">3</name>
        <name evidence="6">1A</name>
        <sequence type="described" ref="VSP_052243"/>
    </isoform>
    <isoform>
        <id>Q709C8-4</id>
        <name evidence="6">4</name>
        <name evidence="6">1B</name>
        <sequence type="described" ref="VSP_052243 VSP_052244 VSP_052245"/>
    </isoform>
</comment>
<comment type="tissue specificity">
    <text evidence="6">Widely expressed.</text>
</comment>
<comment type="domain">
    <text evidence="9">The FFAT motif is required for localization to the endoplasmic reticulum.</text>
</comment>
<comment type="disease" evidence="8">
    <disease id="DI-04668">
        <name>Parkinson disease 23, autosomal recessive, early onset</name>
        <acronym>PARK23</acronym>
        <description>An autosomal recessive, early-onset form of Parkinson disease, a complex neurodegenerative disorder characterized by bradykinesia, resting tremor, muscular rigidity and postural instability, as well as by a clinically significant response to treatment with levodopa. The pathology involves the loss of dopaminergic neurons in the substantia nigra and the presence of Lewy bodies (intraneuronal accumulations of aggregated proteins), in surviving neurons in various areas of the brain.</description>
        <dbReference type="MIM" id="616840"/>
    </disease>
    <text>The disease is caused by variants affecting the gene represented in this entry.</text>
</comment>
<comment type="similarity">
    <text evidence="3">Belongs to the VPS13 family.</text>
</comment>
<comment type="sequence caution" evidence="12">
    <conflict type="erroneous initiation">
        <sequence resource="EMBL-CDS" id="BAA90972"/>
    </conflict>
    <text>Truncated N-terminus.</text>
</comment>
<comment type="sequence caution" evidence="12">
    <conflict type="erroneous initiation">
        <sequence resource="EMBL-CDS" id="BAA92659"/>
    </conflict>
    <text>Extended N-terminus.</text>
</comment>
<organism>
    <name type="scientific">Homo sapiens</name>
    <name type="common">Human</name>
    <dbReference type="NCBI Taxonomy" id="9606"/>
    <lineage>
        <taxon>Eukaryota</taxon>
        <taxon>Metazoa</taxon>
        <taxon>Chordata</taxon>
        <taxon>Craniata</taxon>
        <taxon>Vertebrata</taxon>
        <taxon>Euteleostomi</taxon>
        <taxon>Mammalia</taxon>
        <taxon>Eutheria</taxon>
        <taxon>Euarchontoglires</taxon>
        <taxon>Primates</taxon>
        <taxon>Haplorrhini</taxon>
        <taxon>Catarrhini</taxon>
        <taxon>Hominidae</taxon>
        <taxon>Homo</taxon>
    </lineage>
</organism>
<reference evidence="12 16" key="1">
    <citation type="journal article" date="2004" name="Genomics">
        <title>Analysis of the human VPS13 gene family.</title>
        <authorList>
            <person name="Velayos-Baeza A."/>
            <person name="Vettori A."/>
            <person name="Copley R.R."/>
            <person name="Dobson-Stone C."/>
            <person name="Monaco A.P."/>
        </authorList>
    </citation>
    <scope>NUCLEOTIDE SEQUENCE [MRNA] (ISOFORMS 1; 2; 3 AND 4)</scope>
    <scope>TISSUE SPECIFICITY</scope>
    <source>
        <tissue evidence="6">Lymphoblast</tissue>
    </source>
</reference>
<reference evidence="12 15" key="2">
    <citation type="journal article" date="2000" name="DNA Res.">
        <title>Prediction of the coding sequences of unidentified human genes. XVI. The complete sequences of 150 new cDNA clones from brain which code for large proteins in vitro.</title>
        <authorList>
            <person name="Nagase T."/>
            <person name="Kikuno R."/>
            <person name="Ishikawa K."/>
            <person name="Hirosawa M."/>
            <person name="Ohara O."/>
        </authorList>
    </citation>
    <scope>NUCLEOTIDE SEQUENCE [LARGE SCALE MRNA] OF 1-1439 (ISOFORMS 1/2)</scope>
    <scope>VARIANT LYS-974</scope>
    <source>
        <tissue evidence="15">Brain</tissue>
    </source>
</reference>
<reference evidence="12 14" key="3">
    <citation type="journal article" date="2004" name="Nat. Genet.">
        <title>Complete sequencing and characterization of 21,243 full-length human cDNAs.</title>
        <authorList>
            <person name="Ota T."/>
            <person name="Suzuki Y."/>
            <person name="Nishikawa T."/>
            <person name="Otsuki T."/>
            <person name="Sugiyama T."/>
            <person name="Irie R."/>
            <person name="Wakamatsu A."/>
            <person name="Hayashi K."/>
            <person name="Sato H."/>
            <person name="Nagai K."/>
            <person name="Kimura K."/>
            <person name="Makita H."/>
            <person name="Sekine M."/>
            <person name="Obayashi M."/>
            <person name="Nishi T."/>
            <person name="Shibahara T."/>
            <person name="Tanaka T."/>
            <person name="Ishii S."/>
            <person name="Yamamoto J."/>
            <person name="Saito K."/>
            <person name="Kawai Y."/>
            <person name="Isono Y."/>
            <person name="Nakamura Y."/>
            <person name="Nagahari K."/>
            <person name="Murakami K."/>
            <person name="Yasuda T."/>
            <person name="Iwayanagi T."/>
            <person name="Wagatsuma M."/>
            <person name="Shiratori A."/>
            <person name="Sudo H."/>
            <person name="Hosoiri T."/>
            <person name="Kaku Y."/>
            <person name="Kodaira H."/>
            <person name="Kondo H."/>
            <person name="Sugawara M."/>
            <person name="Takahashi M."/>
            <person name="Kanda K."/>
            <person name="Yokoi T."/>
            <person name="Furuya T."/>
            <person name="Kikkawa E."/>
            <person name="Omura Y."/>
            <person name="Abe K."/>
            <person name="Kamihara K."/>
            <person name="Katsuta N."/>
            <person name="Sato K."/>
            <person name="Tanikawa M."/>
            <person name="Yamazaki M."/>
            <person name="Ninomiya K."/>
            <person name="Ishibashi T."/>
            <person name="Yamashita H."/>
            <person name="Murakawa K."/>
            <person name="Fujimori K."/>
            <person name="Tanai H."/>
            <person name="Kimata M."/>
            <person name="Watanabe M."/>
            <person name="Hiraoka S."/>
            <person name="Chiba Y."/>
            <person name="Ishida S."/>
            <person name="Ono Y."/>
            <person name="Takiguchi S."/>
            <person name="Watanabe S."/>
            <person name="Yosida M."/>
            <person name="Hotuta T."/>
            <person name="Kusano J."/>
            <person name="Kanehori K."/>
            <person name="Takahashi-Fujii A."/>
            <person name="Hara H."/>
            <person name="Tanase T.-O."/>
            <person name="Nomura Y."/>
            <person name="Togiya S."/>
            <person name="Komai F."/>
            <person name="Hara R."/>
            <person name="Takeuchi K."/>
            <person name="Arita M."/>
            <person name="Imose N."/>
            <person name="Musashino K."/>
            <person name="Yuuki H."/>
            <person name="Oshima A."/>
            <person name="Sasaki N."/>
            <person name="Aotsuka S."/>
            <person name="Yoshikawa Y."/>
            <person name="Matsunawa H."/>
            <person name="Ichihara T."/>
            <person name="Shiohata N."/>
            <person name="Sano S."/>
            <person name="Moriya S."/>
            <person name="Momiyama H."/>
            <person name="Satoh N."/>
            <person name="Takami S."/>
            <person name="Terashima Y."/>
            <person name="Suzuki O."/>
            <person name="Nakagawa S."/>
            <person name="Senoh A."/>
            <person name="Mizoguchi H."/>
            <person name="Goto Y."/>
            <person name="Shimizu F."/>
            <person name="Wakebe H."/>
            <person name="Hishigaki H."/>
            <person name="Watanabe T."/>
            <person name="Sugiyama A."/>
            <person name="Takemoto M."/>
            <person name="Kawakami B."/>
            <person name="Yamazaki M."/>
            <person name="Watanabe K."/>
            <person name="Kumagai A."/>
            <person name="Itakura S."/>
            <person name="Fukuzumi Y."/>
            <person name="Fujimori Y."/>
            <person name="Komiyama M."/>
            <person name="Tashiro H."/>
            <person name="Tanigami A."/>
            <person name="Fujiwara T."/>
            <person name="Ono T."/>
            <person name="Yamada K."/>
            <person name="Fujii Y."/>
            <person name="Ozaki K."/>
            <person name="Hirao M."/>
            <person name="Ohmori Y."/>
            <person name="Kawabata A."/>
            <person name="Hikiji T."/>
            <person name="Kobatake N."/>
            <person name="Inagaki H."/>
            <person name="Ikema Y."/>
            <person name="Okamoto S."/>
            <person name="Okitani R."/>
            <person name="Kawakami T."/>
            <person name="Noguchi S."/>
            <person name="Itoh T."/>
            <person name="Shigeta K."/>
            <person name="Senba T."/>
            <person name="Matsumura K."/>
            <person name="Nakajima Y."/>
            <person name="Mizuno T."/>
            <person name="Morinaga M."/>
            <person name="Sasaki M."/>
            <person name="Togashi T."/>
            <person name="Oyama M."/>
            <person name="Hata H."/>
            <person name="Watanabe M."/>
            <person name="Komatsu T."/>
            <person name="Mizushima-Sugano J."/>
            <person name="Satoh T."/>
            <person name="Shirai Y."/>
            <person name="Takahashi Y."/>
            <person name="Nakagawa K."/>
            <person name="Okumura K."/>
            <person name="Nagase T."/>
            <person name="Nomura N."/>
            <person name="Kikuchi H."/>
            <person name="Masuho Y."/>
            <person name="Yamashita R."/>
            <person name="Nakai K."/>
            <person name="Yada T."/>
            <person name="Nakamura Y."/>
            <person name="Ohara O."/>
            <person name="Isogai T."/>
            <person name="Sugano S."/>
        </authorList>
    </citation>
    <scope>NUCLEOTIDE SEQUENCE [LARGE SCALE MRNA] OF 3305-3753 (ISOFORMS 1/3)</scope>
    <source>
        <tissue evidence="14">Colon</tissue>
    </source>
</reference>
<reference evidence="12 13" key="4">
    <citation type="journal article" date="2004" name="Genome Res.">
        <title>The status, quality, and expansion of the NIH full-length cDNA project: the Mammalian Gene Collection (MGC).</title>
        <authorList>
            <consortium name="The MGC Project Team"/>
        </authorList>
    </citation>
    <scope>NUCLEOTIDE SEQUENCE [LARGE SCALE MRNA] OF 3305-3753 (ISOFORMS 1/3)</scope>
</reference>
<reference key="5">
    <citation type="journal article" date="2009" name="Anal. Chem.">
        <title>Lys-N and trypsin cover complementary parts of the phosphoproteome in a refined SCX-based approach.</title>
        <authorList>
            <person name="Gauci S."/>
            <person name="Helbig A.O."/>
            <person name="Slijper M."/>
            <person name="Krijgsveld J."/>
            <person name="Heck A.J."/>
            <person name="Mohammed S."/>
        </authorList>
    </citation>
    <scope>IDENTIFICATION BY MASS SPECTROMETRY [LARGE SCALE ANALYSIS]</scope>
</reference>
<reference key="6">
    <citation type="journal article" date="2009" name="Sci. Signal.">
        <title>Quantitative phosphoproteomic analysis of T cell receptor signaling reveals system-wide modulation of protein-protein interactions.</title>
        <authorList>
            <person name="Mayya V."/>
            <person name="Lundgren D.H."/>
            <person name="Hwang S.-I."/>
            <person name="Rezaul K."/>
            <person name="Wu L."/>
            <person name="Eng J.K."/>
            <person name="Rodionov V."/>
            <person name="Han D.K."/>
        </authorList>
    </citation>
    <scope>PHOSPHORYLATION [LARGE SCALE ANALYSIS] AT THR-614; SER-619; THR-624 AND SER-737</scope>
    <scope>IDENTIFICATION BY MASS SPECTROMETRY [LARGE SCALE ANALYSIS]</scope>
    <source>
        <tissue>Leukemic T-cell</tissue>
    </source>
</reference>
<reference key="7">
    <citation type="journal article" date="2009" name="Science">
        <title>Lysine acetylation targets protein complexes and co-regulates major cellular functions.</title>
        <authorList>
            <person name="Choudhary C."/>
            <person name="Kumar C."/>
            <person name="Gnad F."/>
            <person name="Nielsen M.L."/>
            <person name="Rehman M."/>
            <person name="Walther T.C."/>
            <person name="Olsen J.V."/>
            <person name="Mann M."/>
        </authorList>
    </citation>
    <scope>ACETYLATION [LARGE SCALE ANALYSIS] AT LYS-3538</scope>
    <scope>IDENTIFICATION BY MASS SPECTROMETRY [LARGE SCALE ANALYSIS]</scope>
</reference>
<reference key="8">
    <citation type="journal article" date="2011" name="BMC Syst. Biol.">
        <title>Initial characterization of the human central proteome.</title>
        <authorList>
            <person name="Burkard T.R."/>
            <person name="Planyavsky M."/>
            <person name="Kaupe I."/>
            <person name="Breitwieser F.P."/>
            <person name="Buerckstuemmer T."/>
            <person name="Bennett K.L."/>
            <person name="Superti-Furga G."/>
            <person name="Colinge J."/>
        </authorList>
    </citation>
    <scope>IDENTIFICATION BY MASS SPECTROMETRY [LARGE SCALE ANALYSIS]</scope>
</reference>
<reference key="9">
    <citation type="journal article" date="2012" name="Proc. Natl. Acad. Sci. U.S.A.">
        <title>N-terminal acetylome analyses and functional insights of the N-terminal acetyltransferase NatB.</title>
        <authorList>
            <person name="Van Damme P."/>
            <person name="Lasa M."/>
            <person name="Polevoda B."/>
            <person name="Gazquez C."/>
            <person name="Elosegui-Artola A."/>
            <person name="Kim D.S."/>
            <person name="De Juan-Pardo E."/>
            <person name="Demeyer K."/>
            <person name="Hole K."/>
            <person name="Larrea E."/>
            <person name="Timmerman E."/>
            <person name="Prieto J."/>
            <person name="Arnesen T."/>
            <person name="Sherman F."/>
            <person name="Gevaert K."/>
            <person name="Aldabe R."/>
        </authorList>
    </citation>
    <scope>IDENTIFICATION BY MASS SPECTROMETRY [LARGE SCALE ANALYSIS]</scope>
</reference>
<reference key="10">
    <citation type="journal article" date="2013" name="J. Proteome Res.">
        <title>Toward a comprehensive characterization of a human cancer cell phosphoproteome.</title>
        <authorList>
            <person name="Zhou H."/>
            <person name="Di Palma S."/>
            <person name="Preisinger C."/>
            <person name="Peng M."/>
            <person name="Polat A.N."/>
            <person name="Heck A.J."/>
            <person name="Mohammed S."/>
        </authorList>
    </citation>
    <scope>PHOSPHORYLATION [LARGE SCALE ANALYSIS] AT SER-737; SER-842 AND SER-3641</scope>
    <scope>IDENTIFICATION BY MASS SPECTROMETRY [LARGE SCALE ANALYSIS]</scope>
    <source>
        <tissue>Erythroleukemia</tissue>
    </source>
</reference>
<reference key="11">
    <citation type="journal article" date="2014" name="J. Proteomics">
        <title>An enzyme assisted RP-RPLC approach for in-depth analysis of human liver phosphoproteome.</title>
        <authorList>
            <person name="Bian Y."/>
            <person name="Song C."/>
            <person name="Cheng K."/>
            <person name="Dong M."/>
            <person name="Wang F."/>
            <person name="Huang J."/>
            <person name="Sun D."/>
            <person name="Wang L."/>
            <person name="Ye M."/>
            <person name="Zou H."/>
        </authorList>
    </citation>
    <scope>PHOSPHORYLATION [LARGE SCALE ANALYSIS] AT SER-2473</scope>
    <scope>IDENTIFICATION BY MASS SPECTROMETRY [LARGE SCALE ANALYSIS]</scope>
    <source>
        <tissue>Liver</tissue>
    </source>
</reference>
<reference key="12">
    <citation type="journal article" date="2014" name="Mol. Cell. Proteomics">
        <title>Immunoaffinity enrichment and mass spectrometry analysis of protein methylation.</title>
        <authorList>
            <person name="Guo A."/>
            <person name="Gu H."/>
            <person name="Zhou J."/>
            <person name="Mulhern D."/>
            <person name="Wang Y."/>
            <person name="Lee K.A."/>
            <person name="Yang V."/>
            <person name="Aguiar M."/>
            <person name="Kornhauser J."/>
            <person name="Jia X."/>
            <person name="Ren J."/>
            <person name="Beausoleil S.A."/>
            <person name="Silva J.C."/>
            <person name="Vemulapalli V."/>
            <person name="Bedford M.T."/>
            <person name="Comb M.J."/>
        </authorList>
    </citation>
    <scope>METHYLATION [LARGE SCALE ANALYSIS] AT ARG-3526</scope>
    <scope>IDENTIFICATION BY MASS SPECTROMETRY [LARGE SCALE ANALYSIS]</scope>
    <source>
        <tissue>Colon carcinoma</tissue>
    </source>
</reference>
<reference key="13">
    <citation type="journal article" date="2016" name="Am. J. Hum. Genet.">
        <title>Loss of mitochondrial morphology, transmembrane potential, and respiration function in autosomal-recessive parkinsonism causes mitochondrial dysfunction and increases PINK1/Parkin-dependent mitophagy.</title>
        <authorList>
            <consortium name="French Parkinson's Disease Genetics Study (PDG)"/>
            <consortium name="International Parkinson's Disease Genomics Consortium (IPDGC)"/>
            <consortium name="International Parkinson's Disease Genomics Consortium IPDGC"/>
            <person name="Lesage S."/>
            <person name="Drouet V."/>
            <person name="Majounie E."/>
            <person name="Deramecourt V."/>
            <person name="Jacoupy M."/>
            <person name="Nicolas A."/>
            <person name="Cormier-Dequaire F."/>
            <person name="Hassoun S.M."/>
            <person name="Pujol C."/>
            <person name="Ciura S."/>
            <person name="Erpapazoglou Z."/>
            <person name="Usenko T."/>
            <person name="Maurage C.A."/>
            <person name="Sahbatou M."/>
            <person name="Liebau S."/>
            <person name="Ding J."/>
            <person name="Bilgic B."/>
            <person name="Emre M."/>
            <person name="Erginel-Unaltuna N."/>
            <person name="Guven G."/>
            <person name="Tison F."/>
            <person name="Tranchant C."/>
            <person name="Vidailhet M."/>
            <person name="Corvol J.C."/>
            <person name="Krack P."/>
            <person name="Leutenegger A.L."/>
            <person name="Nalls M.A."/>
            <person name="Hernandez D.G."/>
            <person name="Heutink P."/>
            <person name="Gibbs J.R."/>
            <person name="Hardy J."/>
            <person name="Wood N.W."/>
            <person name="Gasser T."/>
            <person name="Durr A."/>
            <person name="Deleuze J.F."/>
            <person name="Tazir M."/>
            <person name="Destee A."/>
            <person name="Lohmann E."/>
            <person name="Kabashi E."/>
            <person name="Singleton A."/>
            <person name="Corti O."/>
            <person name="Brice A."/>
        </authorList>
    </citation>
    <scope>FUNCTION</scope>
    <scope>SUBCELLULAR LOCATION</scope>
    <scope>INVOLVEMENT IN PARK23</scope>
    <scope>VARIANT PARK23 ARG-1389</scope>
</reference>
<reference key="14">
    <citation type="journal article" date="2015" name="Proc. Natl. Acad. Sci. U.S.A.">
        <title>Neomorphic effects of recurrent somatic mutations in Yin Yang 1 in insulin-producing adenomas.</title>
        <authorList>
            <person name="Cromer M.K."/>
            <person name="Choi M."/>
            <person name="Nelson-Williams C."/>
            <person name="Fonseca A.L."/>
            <person name="Kunstman J.W."/>
            <person name="Korah R.M."/>
            <person name="Overton J.D."/>
            <person name="Mane S."/>
            <person name="Kenney B."/>
            <person name="Malchoff C.D."/>
            <person name="Stalberg P."/>
            <person name="Akerstroem G."/>
            <person name="Westin G."/>
            <person name="Hellman P."/>
            <person name="Carling T."/>
            <person name="Bjoerklund P."/>
            <person name="Lifton R.P."/>
        </authorList>
    </citation>
    <scope>VARIANT PHE-2872</scope>
</reference>
<reference key="15">
    <citation type="journal article" date="2018" name="J. Cell Biol.">
        <title>VPS13A and VPS13C are lipid transport proteins differentially localized at ER contact sites.</title>
        <authorList>
            <person name="Kumar N."/>
            <person name="Leonzino M."/>
            <person name="Hancock-Cerutti W."/>
            <person name="Horenkamp F.A."/>
            <person name="Li P."/>
            <person name="Lees J.A."/>
            <person name="Wheeler H."/>
            <person name="Reinisch K.M."/>
            <person name="De Camilli P."/>
        </authorList>
    </citation>
    <scope>SUBCELLULAR LOCATION</scope>
    <scope>DOMAIN FFAT MOTIF</scope>
    <scope>MUTAGENESIS OF 878-TYR-PHE-879</scope>
</reference>
<proteinExistence type="evidence at protein level"/>
<dbReference type="EMBL" id="AJ608770">
    <property type="protein sequence ID" value="CAE75582.1"/>
    <property type="molecule type" value="mRNA"/>
</dbReference>
<dbReference type="EMBL" id="AJ608771">
    <property type="protein sequence ID" value="CAE75583.1"/>
    <property type="molecule type" value="mRNA"/>
</dbReference>
<dbReference type="EMBL" id="AJ626860">
    <property type="protein sequence ID" value="CAF25187.1"/>
    <property type="molecule type" value="mRNA"/>
</dbReference>
<dbReference type="EMBL" id="AJ626861">
    <property type="protein sequence ID" value="CAF25188.1"/>
    <property type="molecule type" value="mRNA"/>
</dbReference>
<dbReference type="EMBL" id="AB037842">
    <property type="protein sequence ID" value="BAA92659.1"/>
    <property type="status" value="ALT_INIT"/>
    <property type="molecule type" value="mRNA"/>
</dbReference>
<dbReference type="EMBL" id="AK000143">
    <property type="protein sequence ID" value="BAA90972.1"/>
    <property type="status" value="ALT_INIT"/>
    <property type="molecule type" value="mRNA"/>
</dbReference>
<dbReference type="EMBL" id="BC069387">
    <property type="protein sequence ID" value="AAH69387.1"/>
    <property type="molecule type" value="mRNA"/>
</dbReference>
<dbReference type="CCDS" id="CCDS10180.1">
    <molecule id="Q709C8-3"/>
</dbReference>
<dbReference type="CCDS" id="CCDS32257.1">
    <molecule id="Q709C8-1"/>
</dbReference>
<dbReference type="CCDS" id="CCDS45272.1">
    <molecule id="Q709C8-2"/>
</dbReference>
<dbReference type="CCDS" id="CCDS58367.1">
    <molecule id="Q709C8-4"/>
</dbReference>
<dbReference type="RefSeq" id="NP_001018098.1">
    <molecule id="Q709C8-2"/>
    <property type="nucleotide sequence ID" value="NM_001018088.3"/>
</dbReference>
<dbReference type="RefSeq" id="NP_060154.3">
    <molecule id="Q709C8-3"/>
    <property type="nucleotide sequence ID" value="NM_017684.4"/>
</dbReference>
<dbReference type="RefSeq" id="NP_060550.2">
    <molecule id="Q709C8-4"/>
    <property type="nucleotide sequence ID" value="NM_018080.3"/>
</dbReference>
<dbReference type="RefSeq" id="NP_065872.1">
    <molecule id="Q709C8-1"/>
    <property type="nucleotide sequence ID" value="NM_020821.3"/>
</dbReference>
<dbReference type="SMR" id="Q709C8"/>
<dbReference type="BioGRID" id="120186">
    <property type="interactions" value="128"/>
</dbReference>
<dbReference type="ELM" id="Q709C8"/>
<dbReference type="FunCoup" id="Q709C8">
    <property type="interactions" value="2695"/>
</dbReference>
<dbReference type="IntAct" id="Q709C8">
    <property type="interactions" value="61"/>
</dbReference>
<dbReference type="MINT" id="Q709C8"/>
<dbReference type="STRING" id="9606.ENSP00000493560"/>
<dbReference type="CarbonylDB" id="Q709C8"/>
<dbReference type="GlyGen" id="Q709C8">
    <property type="glycosylation" value="4 sites, 3 N-linked glycans (2 sites), 1 O-linked glycan (1 site)"/>
</dbReference>
<dbReference type="iPTMnet" id="Q709C8"/>
<dbReference type="MetOSite" id="Q709C8"/>
<dbReference type="PhosphoSitePlus" id="Q709C8"/>
<dbReference type="SwissPalm" id="Q709C8"/>
<dbReference type="BioMuta" id="VPS13C"/>
<dbReference type="DMDM" id="74712594"/>
<dbReference type="jPOST" id="Q709C8"/>
<dbReference type="MassIVE" id="Q709C8"/>
<dbReference type="PaxDb" id="9606-ENSP00000261517"/>
<dbReference type="PeptideAtlas" id="Q709C8"/>
<dbReference type="ProteomicsDB" id="68512">
    <molecule id="Q709C8-1"/>
</dbReference>
<dbReference type="ProteomicsDB" id="68513">
    <molecule id="Q709C8-2"/>
</dbReference>
<dbReference type="ProteomicsDB" id="68514">
    <molecule id="Q709C8-3"/>
</dbReference>
<dbReference type="ProteomicsDB" id="68515">
    <molecule id="Q709C8-4"/>
</dbReference>
<dbReference type="Pumba" id="Q709C8"/>
<dbReference type="Antibodypedia" id="50681">
    <property type="antibodies" value="14 antibodies from 8 providers"/>
</dbReference>
<dbReference type="DNASU" id="54832"/>
<dbReference type="Ensembl" id="ENST00000249837.7">
    <molecule id="Q709C8-3"/>
    <property type="protein sequence ID" value="ENSP00000249837.3"/>
    <property type="gene ID" value="ENSG00000129003.19"/>
</dbReference>
<dbReference type="Ensembl" id="ENST00000395898.3">
    <molecule id="Q709C8-4"/>
    <property type="protein sequence ID" value="ENSP00000379235.3"/>
    <property type="gene ID" value="ENSG00000129003.19"/>
</dbReference>
<dbReference type="Ensembl" id="ENST00000644861.2">
    <molecule id="Q709C8-1"/>
    <property type="protein sequence ID" value="ENSP00000493560.2"/>
    <property type="gene ID" value="ENSG00000129003.19"/>
</dbReference>
<dbReference type="Ensembl" id="ENST00000645819.1">
    <molecule id="Q709C8-2"/>
    <property type="protein sequence ID" value="ENSP00000496179.1"/>
    <property type="gene ID" value="ENSG00000129003.19"/>
</dbReference>
<dbReference type="GeneID" id="54832"/>
<dbReference type="KEGG" id="hsa:54832"/>
<dbReference type="MANE-Select" id="ENST00000644861.2">
    <property type="protein sequence ID" value="ENSP00000493560.2"/>
    <property type="RefSeq nucleotide sequence ID" value="NM_020821.3"/>
    <property type="RefSeq protein sequence ID" value="NP_065872.1"/>
</dbReference>
<dbReference type="UCSC" id="uc002agz.4">
    <molecule id="Q709C8-1"/>
    <property type="organism name" value="human"/>
</dbReference>
<dbReference type="AGR" id="HGNC:23594"/>
<dbReference type="CTD" id="54832"/>
<dbReference type="DisGeNET" id="54832"/>
<dbReference type="GeneCards" id="VPS13C"/>
<dbReference type="HGNC" id="HGNC:23594">
    <property type="gene designation" value="VPS13C"/>
</dbReference>
<dbReference type="HPA" id="ENSG00000129003">
    <property type="expression patterns" value="Low tissue specificity"/>
</dbReference>
<dbReference type="MalaCards" id="VPS13C"/>
<dbReference type="MIM" id="608879">
    <property type="type" value="gene"/>
</dbReference>
<dbReference type="MIM" id="616840">
    <property type="type" value="phenotype"/>
</dbReference>
<dbReference type="neXtProt" id="NX_Q709C8"/>
<dbReference type="OpenTargets" id="ENSG00000129003"/>
<dbReference type="Orphanet" id="2828">
    <property type="disease" value="Young-onset Parkinson disease"/>
</dbReference>
<dbReference type="PharmGKB" id="PA134990089"/>
<dbReference type="VEuPathDB" id="HostDB:ENSG00000129003"/>
<dbReference type="eggNOG" id="KOG1809">
    <property type="taxonomic scope" value="Eukaryota"/>
</dbReference>
<dbReference type="GeneTree" id="ENSGT00950000183083"/>
<dbReference type="HOGENOM" id="CLU_000135_1_1_1"/>
<dbReference type="InParanoid" id="Q709C8"/>
<dbReference type="OMA" id="SGWRPIR"/>
<dbReference type="OrthoDB" id="428159at2759"/>
<dbReference type="PAN-GO" id="Q709C8">
    <property type="GO annotations" value="4 GO annotations based on evolutionary models"/>
</dbReference>
<dbReference type="PhylomeDB" id="Q709C8"/>
<dbReference type="TreeFam" id="TF300316"/>
<dbReference type="PathwayCommons" id="Q709C8"/>
<dbReference type="SignaLink" id="Q709C8"/>
<dbReference type="BioGRID-ORCS" id="54832">
    <property type="hits" value="8 hits in 1163 CRISPR screens"/>
</dbReference>
<dbReference type="ChiTaRS" id="VPS13C">
    <property type="organism name" value="human"/>
</dbReference>
<dbReference type="GenomeRNAi" id="54832"/>
<dbReference type="Pharos" id="Q709C8">
    <property type="development level" value="Tbio"/>
</dbReference>
<dbReference type="PRO" id="PR:Q709C8"/>
<dbReference type="Proteomes" id="UP000005640">
    <property type="component" value="Chromosome 15"/>
</dbReference>
<dbReference type="RNAct" id="Q709C8">
    <property type="molecule type" value="protein"/>
</dbReference>
<dbReference type="Bgee" id="ENSG00000129003">
    <property type="expression patterns" value="Expressed in calcaneal tendon and 206 other cell types or tissues"/>
</dbReference>
<dbReference type="ExpressionAtlas" id="Q709C8">
    <property type="expression patterns" value="baseline and differential"/>
</dbReference>
<dbReference type="GO" id="GO:0005737">
    <property type="term" value="C:cytoplasm"/>
    <property type="evidence" value="ECO:0000304"/>
    <property type="project" value="ParkinsonsUK-UCL"/>
</dbReference>
<dbReference type="GO" id="GO:0005829">
    <property type="term" value="C:cytosol"/>
    <property type="evidence" value="ECO:0000314"/>
    <property type="project" value="ParkinsonsUK-UCL"/>
</dbReference>
<dbReference type="GO" id="GO:0032127">
    <property type="term" value="C:dense core granule membrane"/>
    <property type="evidence" value="ECO:0007669"/>
    <property type="project" value="Ensembl"/>
</dbReference>
<dbReference type="GO" id="GO:0005789">
    <property type="term" value="C:endoplasmic reticulum membrane"/>
    <property type="evidence" value="ECO:0000314"/>
    <property type="project" value="UniProtKB"/>
</dbReference>
<dbReference type="GO" id="GO:0070062">
    <property type="term" value="C:extracellular exosome"/>
    <property type="evidence" value="ECO:0007005"/>
    <property type="project" value="UniProtKB"/>
</dbReference>
<dbReference type="GO" id="GO:0005770">
    <property type="term" value="C:late endosome"/>
    <property type="evidence" value="ECO:0000314"/>
    <property type="project" value="UniProtKB"/>
</dbReference>
<dbReference type="GO" id="GO:0031902">
    <property type="term" value="C:late endosome membrane"/>
    <property type="evidence" value="ECO:0007669"/>
    <property type="project" value="UniProtKB-SubCell"/>
</dbReference>
<dbReference type="GO" id="GO:0005811">
    <property type="term" value="C:lipid droplet"/>
    <property type="evidence" value="ECO:0000314"/>
    <property type="project" value="UniProtKB"/>
</dbReference>
<dbReference type="GO" id="GO:0005765">
    <property type="term" value="C:lysosomal membrane"/>
    <property type="evidence" value="ECO:0007669"/>
    <property type="project" value="UniProtKB-SubCell"/>
</dbReference>
<dbReference type="GO" id="GO:0005764">
    <property type="term" value="C:lysosome"/>
    <property type="evidence" value="ECO:0000314"/>
    <property type="project" value="UniProtKB"/>
</dbReference>
<dbReference type="GO" id="GO:0005741">
    <property type="term" value="C:mitochondrial outer membrane"/>
    <property type="evidence" value="ECO:0000314"/>
    <property type="project" value="ParkinsonsUK-UCL"/>
</dbReference>
<dbReference type="GO" id="GO:0006895">
    <property type="term" value="P:Golgi to endosome transport"/>
    <property type="evidence" value="ECO:0000304"/>
    <property type="project" value="ParkinsonsUK-UCL"/>
</dbReference>
<dbReference type="GO" id="GO:0006869">
    <property type="term" value="P:lipid transport"/>
    <property type="evidence" value="ECO:0007669"/>
    <property type="project" value="UniProtKB-KW"/>
</dbReference>
<dbReference type="GO" id="GO:0007005">
    <property type="term" value="P:mitochondrion organization"/>
    <property type="evidence" value="ECO:0000315"/>
    <property type="project" value="ParkinsonsUK-UCL"/>
</dbReference>
<dbReference type="GO" id="GO:1905090">
    <property type="term" value="P:negative regulation of type 2 mitophagy"/>
    <property type="evidence" value="ECO:0000315"/>
    <property type="project" value="ParkinsonsUK-UCL"/>
</dbReference>
<dbReference type="GO" id="GO:0045053">
    <property type="term" value="P:protein retention in Golgi apparatus"/>
    <property type="evidence" value="ECO:0000318"/>
    <property type="project" value="GO_Central"/>
</dbReference>
<dbReference type="GO" id="GO:0006623">
    <property type="term" value="P:protein targeting to vacuole"/>
    <property type="evidence" value="ECO:0000318"/>
    <property type="project" value="GO_Central"/>
</dbReference>
<dbReference type="GO" id="GO:0032868">
    <property type="term" value="P:response to insulin"/>
    <property type="evidence" value="ECO:0007669"/>
    <property type="project" value="Ensembl"/>
</dbReference>
<dbReference type="InterPro" id="IPR026847">
    <property type="entry name" value="VPS13"/>
</dbReference>
<dbReference type="InterPro" id="IPR056748">
    <property type="entry name" value="VPS13-like_C"/>
</dbReference>
<dbReference type="InterPro" id="IPR056747">
    <property type="entry name" value="VPS13-like_M"/>
</dbReference>
<dbReference type="InterPro" id="IPR026854">
    <property type="entry name" value="VPS13_N"/>
</dbReference>
<dbReference type="InterPro" id="IPR009543">
    <property type="entry name" value="VPS13_VAB"/>
</dbReference>
<dbReference type="PANTHER" id="PTHR16166:SF125">
    <property type="entry name" value="INTERMEMBRANE LIPID TRANSFER PROTEIN VPS13C"/>
    <property type="match status" value="1"/>
</dbReference>
<dbReference type="PANTHER" id="PTHR16166">
    <property type="entry name" value="VACUOLAR PROTEIN SORTING-ASSOCIATED PROTEIN VPS13"/>
    <property type="match status" value="1"/>
</dbReference>
<dbReference type="Pfam" id="PF25037">
    <property type="entry name" value="VPS13_C"/>
    <property type="match status" value="1"/>
</dbReference>
<dbReference type="Pfam" id="PF25033">
    <property type="entry name" value="VPS13_M"/>
    <property type="match status" value="1"/>
</dbReference>
<dbReference type="Pfam" id="PF12624">
    <property type="entry name" value="VPS13_N"/>
    <property type="match status" value="1"/>
</dbReference>
<dbReference type="Pfam" id="PF25036">
    <property type="entry name" value="VPS13_VAB"/>
    <property type="match status" value="1"/>
</dbReference>
<keyword id="KW-0007">Acetylation</keyword>
<keyword id="KW-0025">Alternative splicing</keyword>
<keyword id="KW-0225">Disease variant</keyword>
<keyword id="KW-0256">Endoplasmic reticulum</keyword>
<keyword id="KW-0967">Endosome</keyword>
<keyword id="KW-0551">Lipid droplet</keyword>
<keyword id="KW-0445">Lipid transport</keyword>
<keyword id="KW-0458">Lysosome</keyword>
<keyword id="KW-0472">Membrane</keyword>
<keyword id="KW-0488">Methylation</keyword>
<keyword id="KW-0496">Mitochondrion</keyword>
<keyword id="KW-1000">Mitochondrion outer membrane</keyword>
<keyword id="KW-0523">Neurodegeneration</keyword>
<keyword id="KW-0907">Parkinson disease</keyword>
<keyword id="KW-0908">Parkinsonism</keyword>
<keyword id="KW-0597">Phosphoprotein</keyword>
<keyword id="KW-1267">Proteomics identification</keyword>
<keyword id="KW-1185">Reference proteome</keyword>
<keyword id="KW-0813">Transport</keyword>
<protein>
    <recommendedName>
        <fullName evidence="11">Intermembrane lipid transfer protein VPS13C</fullName>
    </recommendedName>
    <alternativeName>
        <fullName evidence="12">Vacuolar protein sorting-associated protein 13C</fullName>
    </alternativeName>
</protein>
<evidence type="ECO:0000250" key="1">
    <source>
        <dbReference type="UniProtKB" id="Q07878"/>
    </source>
</evidence>
<evidence type="ECO:0000250" key="2">
    <source>
        <dbReference type="UniProtKB" id="Q8BX70"/>
    </source>
</evidence>
<evidence type="ECO:0000255" key="3"/>
<evidence type="ECO:0000256" key="4">
    <source>
        <dbReference type="SAM" id="MobiDB-lite"/>
    </source>
</evidence>
<evidence type="ECO:0000269" key="5">
    <source>
    </source>
</evidence>
<evidence type="ECO:0000269" key="6">
    <source>
    </source>
</evidence>
<evidence type="ECO:0000269" key="7">
    <source>
    </source>
</evidence>
<evidence type="ECO:0000269" key="8">
    <source>
    </source>
</evidence>
<evidence type="ECO:0000269" key="9">
    <source>
    </source>
</evidence>
<evidence type="ECO:0000303" key="10">
    <source>
    </source>
</evidence>
<evidence type="ECO:0000303" key="11">
    <source>
    </source>
</evidence>
<evidence type="ECO:0000305" key="12"/>
<evidence type="ECO:0000312" key="13">
    <source>
        <dbReference type="EMBL" id="AAH69387.1"/>
    </source>
</evidence>
<evidence type="ECO:0000312" key="14">
    <source>
        <dbReference type="EMBL" id="BAA90972.1"/>
    </source>
</evidence>
<evidence type="ECO:0000312" key="15">
    <source>
        <dbReference type="EMBL" id="BAA92659.1"/>
    </source>
</evidence>
<evidence type="ECO:0000312" key="16">
    <source>
        <dbReference type="EMBL" id="CAE75583.1"/>
    </source>
</evidence>
<evidence type="ECO:0007744" key="17">
    <source>
    </source>
</evidence>
<evidence type="ECO:0007744" key="18">
    <source>
    </source>
</evidence>
<evidence type="ECO:0007744" key="19">
    <source>
    </source>
</evidence>
<evidence type="ECO:0007744" key="20">
    <source>
    </source>
</evidence>
<evidence type="ECO:0007744" key="21">
    <source>
    </source>
</evidence>